<protein>
    <recommendedName>
        <fullName>Probable cysteine--tRNA ligase, mitochondrial</fullName>
        <ecNumber>6.1.1.16</ecNumber>
    </recommendedName>
    <alternativeName>
        <fullName>Cysteinyl-tRNA synthetase</fullName>
        <shortName>CysRS</shortName>
    </alternativeName>
</protein>
<feature type="transit peptide" description="Mitochondrion" evidence="3">
    <location>
        <begin position="1"/>
        <end status="unknown"/>
    </location>
</feature>
<feature type="chain" id="PRO_0000250741" description="Probable cysteine--tRNA ligase, mitochondrial">
    <location>
        <begin status="unknown"/>
        <end position="564"/>
    </location>
</feature>
<feature type="short sequence motif" description="'HIGH' region">
    <location>
        <begin position="80"/>
        <end position="90"/>
    </location>
</feature>
<feature type="short sequence motif" description="'KIIK' region">
    <location>
        <begin position="124"/>
        <end position="127"/>
    </location>
</feature>
<feature type="short sequence motif" description="'KMSKS' region">
    <location>
        <begin position="317"/>
        <end position="321"/>
    </location>
</feature>
<feature type="binding site" evidence="2">
    <location>
        <position position="78"/>
    </location>
    <ligand>
        <name>Zn(2+)</name>
        <dbReference type="ChEBI" id="CHEBI:29105"/>
    </ligand>
</feature>
<feature type="binding site" evidence="2">
    <location>
        <position position="79"/>
    </location>
    <ligand>
        <name>L-cysteine</name>
        <dbReference type="ChEBI" id="CHEBI:35235"/>
    </ligand>
</feature>
<feature type="binding site" evidence="2">
    <location>
        <position position="119"/>
    </location>
    <ligand>
        <name>L-cysteine</name>
        <dbReference type="ChEBI" id="CHEBI:35235"/>
    </ligand>
</feature>
<feature type="binding site" evidence="2">
    <location>
        <position position="257"/>
    </location>
    <ligand>
        <name>Zn(2+)</name>
        <dbReference type="ChEBI" id="CHEBI:29105"/>
    </ligand>
</feature>
<feature type="binding site" evidence="2">
    <location>
        <position position="282"/>
    </location>
    <ligand>
        <name>L-cysteine</name>
        <dbReference type="ChEBI" id="CHEBI:35235"/>
    </ligand>
</feature>
<feature type="binding site" evidence="2">
    <location>
        <position position="282"/>
    </location>
    <ligand>
        <name>Zn(2+)</name>
        <dbReference type="ChEBI" id="CHEBI:29105"/>
    </ligand>
</feature>
<feature type="binding site" evidence="2">
    <location>
        <position position="286"/>
    </location>
    <ligand>
        <name>Zn(2+)</name>
        <dbReference type="ChEBI" id="CHEBI:29105"/>
    </ligand>
</feature>
<feature type="binding site" evidence="1">
    <location>
        <position position="320"/>
    </location>
    <ligand>
        <name>ATP</name>
        <dbReference type="ChEBI" id="CHEBI:30616"/>
    </ligand>
</feature>
<feature type="sequence variant" id="VAR_075667" description="In COXPD27." evidence="5">
    <location>
        <begin position="191"/>
        <end position="218"/>
    </location>
</feature>
<feature type="sequence variant" id="VAR_075668" description="In COXPD27; dbSNP:rs753472937." evidence="6">
    <location>
        <position position="217"/>
    </location>
</feature>
<feature type="sequence variant" id="VAR_075669" description="In COXPD27; dbSNP:rs557671802." evidence="6">
    <original>P</original>
    <variation>L</variation>
    <location>
        <position position="251"/>
    </location>
</feature>
<feature type="sequence variant" id="VAR_034523" description="In dbSNP:rs965189.">
    <original>E</original>
    <variation>K</variation>
    <location>
        <position position="440"/>
    </location>
</feature>
<feature type="sequence variant" id="VAR_034524" description="In dbSNP:rs1043886." evidence="4">
    <original>Q</original>
    <variation>P</variation>
    <location>
        <position position="555"/>
    </location>
</feature>
<feature type="mutagenesis site" description="No effect on cysteine persulfide synthase activity; when associated with D-257. Loss of cysteine--tRNA ligase activity; when associated with D-257." evidence="7">
    <original>C</original>
    <variation>D</variation>
    <location>
        <position position="78"/>
    </location>
</feature>
<feature type="mutagenesis site" description="No effect on cysteine--tRNA ligase activity. Loss of cysteine persulfide synthase activity." evidence="7">
    <original>KIIK</original>
    <variation>AIIA</variation>
    <location>
        <begin position="124"/>
        <end position="127"/>
    </location>
</feature>
<feature type="mutagenesis site" description="No effect on cysteine persulfide synthase activity; when associated with D-78. Loss of cysteine--tRNA ligase activity; when associated with D-78." evidence="7">
    <original>C</original>
    <variation>D</variation>
    <location>
        <position position="257"/>
    </location>
</feature>
<feature type="mutagenesis site" description="No effect on cysteine--tRNA ligase activity. Loss of cysteine persulfide synthase activity." evidence="7">
    <original>KMSK</original>
    <variation>AMSA</variation>
    <location>
        <begin position="317"/>
        <end position="320"/>
    </location>
</feature>
<feature type="sequence conflict" description="In Ref. 4; BAB93499." evidence="8" ref="4">
    <original>RGNAYSTAKGNVYFDLKSRGD</original>
    <variation>SWERLFNGKRQCLLRSESLEET</variation>
    <location>
        <begin position="182"/>
        <end position="202"/>
    </location>
</feature>
<feature type="sequence conflict" description="In Ref. 4; BAB93499." evidence="8" ref="4">
    <original>LVGVVPGPVGEPADSDK</original>
    <variation>IGRRGPWSSPETSGLLTS</variation>
    <location>
        <begin position="207"/>
        <end position="223"/>
    </location>
</feature>
<feature type="sequence conflict" description="In Ref. 4; BAB93499." evidence="8" ref="4">
    <original>S</original>
    <variation>N</variation>
    <location>
        <position position="227"/>
    </location>
</feature>
<gene>
    <name evidence="10" type="primary">CARS2</name>
    <name type="ORF">OK/SW-cl.10</name>
</gene>
<accession>Q9HA77</accession>
<accession>Q8NI84</accession>
<accession>Q96IV4</accession>
<organism>
    <name type="scientific">Homo sapiens</name>
    <name type="common">Human</name>
    <dbReference type="NCBI Taxonomy" id="9606"/>
    <lineage>
        <taxon>Eukaryota</taxon>
        <taxon>Metazoa</taxon>
        <taxon>Chordata</taxon>
        <taxon>Craniata</taxon>
        <taxon>Vertebrata</taxon>
        <taxon>Euteleostomi</taxon>
        <taxon>Mammalia</taxon>
        <taxon>Eutheria</taxon>
        <taxon>Euarchontoglires</taxon>
        <taxon>Primates</taxon>
        <taxon>Haplorrhini</taxon>
        <taxon>Catarrhini</taxon>
        <taxon>Hominidae</taxon>
        <taxon>Homo</taxon>
    </lineage>
</organism>
<sequence>MLRTTRGPGLGPPLLQAALGLGRAGWHWPAGRAASGGRGRAWLQPTGRETGVQVYNSLTGRKEPLIVAHAEAASWYSCGPTVYDHAHLGHACSYVRFDIIRRILTKVFGCSIVMVMGITDVDDKIIKRANEMNISPASLASLYEEDFKQDMAALKVLPPTVYLRVTENIPQIISFIEGIIARGNAYSTAKGNVYFDLKSRGDKYGKLVGVVPGPVGEPADSDKRHASDFALWKAAKPQEVFWASPWGPGRPGWHIECSAIASMVFGSQLDIHSGGIDLAFPHHENEIAQCEVFHQCEQWGNYFLHSGHLHAKGKEEKMSKSLKNYITIKDFLKTFSPDVFRFFCLRSSYRSAIDYSDSAMLQAQQLLLGLGSFLEDARAYMKGQLACGSVREAMLWERLSSTKRAVKAALADDFDTPRVVDAILGLAHHGNGQLRASLKEPEGPRSPAVFGAIISYFEQFFETVGISLANQQYVSGDGSEATLHGVVDELVRFRQKVRQFALAMPEATGDARRQQLLERQPLLEACDTLRRGLTAHGINIKDRSSTTSTWELLDQRTKDQKSAG</sequence>
<reference key="1">
    <citation type="journal article" date="2004" name="Nat. Genet.">
        <title>Complete sequencing and characterization of 21,243 full-length human cDNAs.</title>
        <authorList>
            <person name="Ota T."/>
            <person name="Suzuki Y."/>
            <person name="Nishikawa T."/>
            <person name="Otsuki T."/>
            <person name="Sugiyama T."/>
            <person name="Irie R."/>
            <person name="Wakamatsu A."/>
            <person name="Hayashi K."/>
            <person name="Sato H."/>
            <person name="Nagai K."/>
            <person name="Kimura K."/>
            <person name="Makita H."/>
            <person name="Sekine M."/>
            <person name="Obayashi M."/>
            <person name="Nishi T."/>
            <person name="Shibahara T."/>
            <person name="Tanaka T."/>
            <person name="Ishii S."/>
            <person name="Yamamoto J."/>
            <person name="Saito K."/>
            <person name="Kawai Y."/>
            <person name="Isono Y."/>
            <person name="Nakamura Y."/>
            <person name="Nagahari K."/>
            <person name="Murakami K."/>
            <person name="Yasuda T."/>
            <person name="Iwayanagi T."/>
            <person name="Wagatsuma M."/>
            <person name="Shiratori A."/>
            <person name="Sudo H."/>
            <person name="Hosoiri T."/>
            <person name="Kaku Y."/>
            <person name="Kodaira H."/>
            <person name="Kondo H."/>
            <person name="Sugawara M."/>
            <person name="Takahashi M."/>
            <person name="Kanda K."/>
            <person name="Yokoi T."/>
            <person name="Furuya T."/>
            <person name="Kikkawa E."/>
            <person name="Omura Y."/>
            <person name="Abe K."/>
            <person name="Kamihara K."/>
            <person name="Katsuta N."/>
            <person name="Sato K."/>
            <person name="Tanikawa M."/>
            <person name="Yamazaki M."/>
            <person name="Ninomiya K."/>
            <person name="Ishibashi T."/>
            <person name="Yamashita H."/>
            <person name="Murakawa K."/>
            <person name="Fujimori K."/>
            <person name="Tanai H."/>
            <person name="Kimata M."/>
            <person name="Watanabe M."/>
            <person name="Hiraoka S."/>
            <person name="Chiba Y."/>
            <person name="Ishida S."/>
            <person name="Ono Y."/>
            <person name="Takiguchi S."/>
            <person name="Watanabe S."/>
            <person name="Yosida M."/>
            <person name="Hotuta T."/>
            <person name="Kusano J."/>
            <person name="Kanehori K."/>
            <person name="Takahashi-Fujii A."/>
            <person name="Hara H."/>
            <person name="Tanase T.-O."/>
            <person name="Nomura Y."/>
            <person name="Togiya S."/>
            <person name="Komai F."/>
            <person name="Hara R."/>
            <person name="Takeuchi K."/>
            <person name="Arita M."/>
            <person name="Imose N."/>
            <person name="Musashino K."/>
            <person name="Yuuki H."/>
            <person name="Oshima A."/>
            <person name="Sasaki N."/>
            <person name="Aotsuka S."/>
            <person name="Yoshikawa Y."/>
            <person name="Matsunawa H."/>
            <person name="Ichihara T."/>
            <person name="Shiohata N."/>
            <person name="Sano S."/>
            <person name="Moriya S."/>
            <person name="Momiyama H."/>
            <person name="Satoh N."/>
            <person name="Takami S."/>
            <person name="Terashima Y."/>
            <person name="Suzuki O."/>
            <person name="Nakagawa S."/>
            <person name="Senoh A."/>
            <person name="Mizoguchi H."/>
            <person name="Goto Y."/>
            <person name="Shimizu F."/>
            <person name="Wakebe H."/>
            <person name="Hishigaki H."/>
            <person name="Watanabe T."/>
            <person name="Sugiyama A."/>
            <person name="Takemoto M."/>
            <person name="Kawakami B."/>
            <person name="Yamazaki M."/>
            <person name="Watanabe K."/>
            <person name="Kumagai A."/>
            <person name="Itakura S."/>
            <person name="Fukuzumi Y."/>
            <person name="Fujimori Y."/>
            <person name="Komiyama M."/>
            <person name="Tashiro H."/>
            <person name="Tanigami A."/>
            <person name="Fujiwara T."/>
            <person name="Ono T."/>
            <person name="Yamada K."/>
            <person name="Fujii Y."/>
            <person name="Ozaki K."/>
            <person name="Hirao M."/>
            <person name="Ohmori Y."/>
            <person name="Kawabata A."/>
            <person name="Hikiji T."/>
            <person name="Kobatake N."/>
            <person name="Inagaki H."/>
            <person name="Ikema Y."/>
            <person name="Okamoto S."/>
            <person name="Okitani R."/>
            <person name="Kawakami T."/>
            <person name="Noguchi S."/>
            <person name="Itoh T."/>
            <person name="Shigeta K."/>
            <person name="Senba T."/>
            <person name="Matsumura K."/>
            <person name="Nakajima Y."/>
            <person name="Mizuno T."/>
            <person name="Morinaga M."/>
            <person name="Sasaki M."/>
            <person name="Togashi T."/>
            <person name="Oyama M."/>
            <person name="Hata H."/>
            <person name="Watanabe M."/>
            <person name="Komatsu T."/>
            <person name="Mizushima-Sugano J."/>
            <person name="Satoh T."/>
            <person name="Shirai Y."/>
            <person name="Takahashi Y."/>
            <person name="Nakagawa K."/>
            <person name="Okumura K."/>
            <person name="Nagase T."/>
            <person name="Nomura N."/>
            <person name="Kikuchi H."/>
            <person name="Masuho Y."/>
            <person name="Yamashita R."/>
            <person name="Nakai K."/>
            <person name="Yada T."/>
            <person name="Nakamura Y."/>
            <person name="Ohara O."/>
            <person name="Isogai T."/>
            <person name="Sugano S."/>
        </authorList>
    </citation>
    <scope>NUCLEOTIDE SEQUENCE [LARGE SCALE MRNA]</scope>
    <source>
        <tissue>Mammary gland</tissue>
    </source>
</reference>
<reference key="2">
    <citation type="journal article" date="2004" name="Nature">
        <title>The DNA sequence and analysis of human chromosome 13.</title>
        <authorList>
            <person name="Dunham A."/>
            <person name="Matthews L.H."/>
            <person name="Burton J."/>
            <person name="Ashurst J.L."/>
            <person name="Howe K.L."/>
            <person name="Ashcroft K.J."/>
            <person name="Beare D.M."/>
            <person name="Burford D.C."/>
            <person name="Hunt S.E."/>
            <person name="Griffiths-Jones S."/>
            <person name="Jones M.C."/>
            <person name="Keenan S.J."/>
            <person name="Oliver K."/>
            <person name="Scott C.E."/>
            <person name="Ainscough R."/>
            <person name="Almeida J.P."/>
            <person name="Ambrose K.D."/>
            <person name="Andrews D.T."/>
            <person name="Ashwell R.I.S."/>
            <person name="Babbage A.K."/>
            <person name="Bagguley C.L."/>
            <person name="Bailey J."/>
            <person name="Bannerjee R."/>
            <person name="Barlow K.F."/>
            <person name="Bates K."/>
            <person name="Beasley H."/>
            <person name="Bird C.P."/>
            <person name="Bray-Allen S."/>
            <person name="Brown A.J."/>
            <person name="Brown J.Y."/>
            <person name="Burrill W."/>
            <person name="Carder C."/>
            <person name="Carter N.P."/>
            <person name="Chapman J.C."/>
            <person name="Clamp M.E."/>
            <person name="Clark S.Y."/>
            <person name="Clarke G."/>
            <person name="Clee C.M."/>
            <person name="Clegg S.C."/>
            <person name="Cobley V."/>
            <person name="Collins J.E."/>
            <person name="Corby N."/>
            <person name="Coville G.J."/>
            <person name="Deloukas P."/>
            <person name="Dhami P."/>
            <person name="Dunham I."/>
            <person name="Dunn M."/>
            <person name="Earthrowl M.E."/>
            <person name="Ellington A.G."/>
            <person name="Faulkner L."/>
            <person name="Frankish A.G."/>
            <person name="Frankland J."/>
            <person name="French L."/>
            <person name="Garner P."/>
            <person name="Garnett J."/>
            <person name="Gilbert J.G.R."/>
            <person name="Gilson C.J."/>
            <person name="Ghori J."/>
            <person name="Grafham D.V."/>
            <person name="Gribble S.M."/>
            <person name="Griffiths C."/>
            <person name="Hall R.E."/>
            <person name="Hammond S."/>
            <person name="Harley J.L."/>
            <person name="Hart E.A."/>
            <person name="Heath P.D."/>
            <person name="Howden P.J."/>
            <person name="Huckle E.J."/>
            <person name="Hunt P.J."/>
            <person name="Hunt A.R."/>
            <person name="Johnson C."/>
            <person name="Johnson D."/>
            <person name="Kay M."/>
            <person name="Kimberley A.M."/>
            <person name="King A."/>
            <person name="Laird G.K."/>
            <person name="Langford C.J."/>
            <person name="Lawlor S."/>
            <person name="Leongamornlert D.A."/>
            <person name="Lloyd D.M."/>
            <person name="Lloyd C."/>
            <person name="Loveland J.E."/>
            <person name="Lovell J."/>
            <person name="Martin S."/>
            <person name="Mashreghi-Mohammadi M."/>
            <person name="McLaren S.J."/>
            <person name="McMurray A."/>
            <person name="Milne S."/>
            <person name="Moore M.J.F."/>
            <person name="Nickerson T."/>
            <person name="Palmer S.A."/>
            <person name="Pearce A.V."/>
            <person name="Peck A.I."/>
            <person name="Pelan S."/>
            <person name="Phillimore B."/>
            <person name="Porter K.M."/>
            <person name="Rice C.M."/>
            <person name="Searle S."/>
            <person name="Sehra H.K."/>
            <person name="Shownkeen R."/>
            <person name="Skuce C.D."/>
            <person name="Smith M."/>
            <person name="Steward C.A."/>
            <person name="Sycamore N."/>
            <person name="Tester J."/>
            <person name="Thomas D.W."/>
            <person name="Tracey A."/>
            <person name="Tromans A."/>
            <person name="Tubby B."/>
            <person name="Wall M."/>
            <person name="Wallis J.M."/>
            <person name="West A.P."/>
            <person name="Whitehead S.L."/>
            <person name="Willey D.L."/>
            <person name="Wilming L."/>
            <person name="Wray P.W."/>
            <person name="Wright M.W."/>
            <person name="Young L."/>
            <person name="Coulson A."/>
            <person name="Durbin R.M."/>
            <person name="Hubbard T."/>
            <person name="Sulston J.E."/>
            <person name="Beck S."/>
            <person name="Bentley D.R."/>
            <person name="Rogers J."/>
            <person name="Ross M.T."/>
        </authorList>
    </citation>
    <scope>NUCLEOTIDE SEQUENCE [LARGE SCALE GENOMIC DNA]</scope>
</reference>
<reference key="3">
    <citation type="journal article" date="2004" name="Genome Res.">
        <title>The status, quality, and expansion of the NIH full-length cDNA project: the Mammalian Gene Collection (MGC).</title>
        <authorList>
            <consortium name="The MGC Project Team"/>
        </authorList>
    </citation>
    <scope>NUCLEOTIDE SEQUENCE [LARGE SCALE MRNA]</scope>
    <scope>VARIANT PRO-555</scope>
    <source>
        <tissue>Lung</tissue>
    </source>
</reference>
<reference key="4">
    <citation type="submission" date="2001-05" db="EMBL/GenBank/DDBJ databases">
        <title>Identification of immuno-peptidmics that recognized by tumor-reactive CTL generated from TIL of colon cancer patients.</title>
        <authorList>
            <person name="Shichijo S."/>
            <person name="Itoh K."/>
        </authorList>
    </citation>
    <scope>NUCLEOTIDE SEQUENCE [LARGE SCALE MRNA] OF 2-564</scope>
    <source>
        <tissue>Colon adenocarcinoma</tissue>
    </source>
</reference>
<reference key="5">
    <citation type="journal article" date="2005" name="Biochemistry">
        <title>Toward the full set of human mitochondrial aminoacyl-tRNA synthetases: characterization of AspRS and TyrRS.</title>
        <authorList>
            <person name="Bonnefond L."/>
            <person name="Fender A."/>
            <person name="Rudinger-Thirion J."/>
            <person name="Giege R."/>
            <person name="Florentz C."/>
            <person name="Sissler M."/>
        </authorList>
    </citation>
    <scope>IDENTIFICATION</scope>
</reference>
<reference key="6">
    <citation type="journal article" date="2011" name="BMC Syst. Biol.">
        <title>Initial characterization of the human central proteome.</title>
        <authorList>
            <person name="Burkard T.R."/>
            <person name="Planyavsky M."/>
            <person name="Kaupe I."/>
            <person name="Breitwieser F.P."/>
            <person name="Buerckstuemmer T."/>
            <person name="Bennett K.L."/>
            <person name="Superti-Furga G."/>
            <person name="Colinge J."/>
        </authorList>
    </citation>
    <scope>IDENTIFICATION BY MASS SPECTROMETRY [LARGE SCALE ANALYSIS]</scope>
</reference>
<reference key="7">
    <citation type="journal article" date="2015" name="Proteomics">
        <title>N-terminome analysis of the human mitochondrial proteome.</title>
        <authorList>
            <person name="Vaca Jacome A.S."/>
            <person name="Rabilloud T."/>
            <person name="Schaeffer-Reiss C."/>
            <person name="Rompais M."/>
            <person name="Ayoub D."/>
            <person name="Lane L."/>
            <person name="Bairoch A."/>
            <person name="Van Dorsselaer A."/>
            <person name="Carapito C."/>
        </authorList>
    </citation>
    <scope>IDENTIFICATION BY MASS SPECTROMETRY [LARGE SCALE ANALYSIS]</scope>
</reference>
<reference key="8">
    <citation type="journal article" date="2017" name="Nat. Commun.">
        <title>Cysteinyl-tRNA synthetase governs cysteine polysulfidation and mitochondrial bioenergetics.</title>
        <authorList>
            <person name="Akaike T."/>
            <person name="Ida T."/>
            <person name="Wei F.Y."/>
            <person name="Nishida M."/>
            <person name="Kumagai Y."/>
            <person name="Alam M.M."/>
            <person name="Ihara H."/>
            <person name="Sawa T."/>
            <person name="Matsunaga T."/>
            <person name="Kasamatsu S."/>
            <person name="Nishimura A."/>
            <person name="Morita M."/>
            <person name="Tomizawa K."/>
            <person name="Nishimura A."/>
            <person name="Watanabe S."/>
            <person name="Inaba K."/>
            <person name="Shima H."/>
            <person name="Tanuma N."/>
            <person name="Jung M."/>
            <person name="Fujii S."/>
            <person name="Watanabe Y."/>
            <person name="Ohmuraya M."/>
            <person name="Nagy P."/>
            <person name="Feelisch M."/>
            <person name="Fukuto J.M."/>
            <person name="Motohashi H."/>
        </authorList>
    </citation>
    <scope>FUNCTION</scope>
    <scope>CATALYTIC ACTIVITY</scope>
    <scope>SUBCELLULAR LOCATION</scope>
    <scope>MUTAGENESIS OF CYS-78; 124-LYS--LYS-127; CYS-257 AND 317-LYS--LYS-320</scope>
    <scope>DOMAIN</scope>
</reference>
<reference key="9">
    <citation type="journal article" date="2014" name="Neurology">
        <title>A homozygous splice-site mutation in CARS2 is associated with progressive myoclonic epilepsy.</title>
        <authorList>
            <person name="Hallmann K."/>
            <person name="Zsurka G."/>
            <person name="Moskau-Hartmann S."/>
            <person name="Kirschner J."/>
            <person name="Korinthenberg R."/>
            <person name="Ruppert A.K."/>
            <person name="Ozdemir O."/>
            <person name="Weber Y."/>
            <person name="Becker F."/>
            <person name="Lerche H."/>
            <person name="Elger C.E."/>
            <person name="Thiele H."/>
            <person name="Nuernberg P."/>
            <person name="Sander T."/>
            <person name="Kunz W.S."/>
        </authorList>
    </citation>
    <scope>INVOLVEMENT IN COXPD27</scope>
    <scope>VARIANT COXPD27 191-GLY--PRO-218 DEL</scope>
</reference>
<reference key="10">
    <citation type="journal article" date="2015" name="J. Med. Genet.">
        <title>Mutations in the mitochondrial cysteinyl-tRNA synthase gene, CARS2, lead to a severe epileptic encephalopathy and complex movement disorder.</title>
        <authorList>
            <person name="Coughlin C.R. II"/>
            <person name="Scharer G.H."/>
            <person name="Friederich M.W."/>
            <person name="Yu H.C."/>
            <person name="Geiger E.A."/>
            <person name="Creadon-Swindell G."/>
            <person name="Collins A.E."/>
            <person name="Vanlander A.V."/>
            <person name="Coster R.V."/>
            <person name="Powell C.A."/>
            <person name="Swanson M.A."/>
            <person name="Minczuk M."/>
            <person name="Van Hove J.L."/>
            <person name="Shaikh T.H."/>
        </authorList>
    </citation>
    <scope>INVOLVEMENT IN COXPD27</scope>
    <scope>VARIANTS COXPD27 GLU-217 DEL AND LEU-251</scope>
</reference>
<name>SYCM_HUMAN</name>
<evidence type="ECO:0000250" key="1"/>
<evidence type="ECO:0000250" key="2">
    <source>
        <dbReference type="UniProtKB" id="P21888"/>
    </source>
</evidence>
<evidence type="ECO:0000255" key="3"/>
<evidence type="ECO:0000269" key="4">
    <source>
    </source>
</evidence>
<evidence type="ECO:0000269" key="5">
    <source>
    </source>
</evidence>
<evidence type="ECO:0000269" key="6">
    <source>
    </source>
</evidence>
<evidence type="ECO:0000269" key="7">
    <source>
    </source>
</evidence>
<evidence type="ECO:0000305" key="8"/>
<evidence type="ECO:0000305" key="9">
    <source>
    </source>
</evidence>
<evidence type="ECO:0000312" key="10">
    <source>
        <dbReference type="HGNC" id="HGNC:25695"/>
    </source>
</evidence>
<proteinExistence type="evidence at protein level"/>
<keyword id="KW-0030">Aminoacyl-tRNA synthetase</keyword>
<keyword id="KW-0067">ATP-binding</keyword>
<keyword id="KW-0225">Disease variant</keyword>
<keyword id="KW-0436">Ligase</keyword>
<keyword id="KW-0479">Metal-binding</keyword>
<keyword id="KW-0496">Mitochondrion</keyword>
<keyword id="KW-0547">Nucleotide-binding</keyword>
<keyword id="KW-1274">Primary mitochondrial disease</keyword>
<keyword id="KW-0648">Protein biosynthesis</keyword>
<keyword id="KW-1267">Proteomics identification</keyword>
<keyword id="KW-1185">Reference proteome</keyword>
<keyword id="KW-0809">Transit peptide</keyword>
<keyword id="KW-0862">Zinc</keyword>
<dbReference type="EC" id="6.1.1.16"/>
<dbReference type="EMBL" id="AK022180">
    <property type="protein sequence ID" value="BAB13978.1"/>
    <property type="molecule type" value="mRNA"/>
</dbReference>
<dbReference type="EMBL" id="AL157820">
    <property type="status" value="NOT_ANNOTATED_CDS"/>
    <property type="molecule type" value="Genomic_DNA"/>
</dbReference>
<dbReference type="EMBL" id="AL139385">
    <property type="status" value="NOT_ANNOTATED_CDS"/>
    <property type="molecule type" value="Genomic_DNA"/>
</dbReference>
<dbReference type="EMBL" id="BC007220">
    <property type="protein sequence ID" value="AAH07220.1"/>
    <property type="molecule type" value="mRNA"/>
</dbReference>
<dbReference type="EMBL" id="AB062436">
    <property type="protein sequence ID" value="BAB93499.1"/>
    <property type="status" value="ALT_INIT"/>
    <property type="molecule type" value="mRNA"/>
</dbReference>
<dbReference type="CCDS" id="CCDS9514.1"/>
<dbReference type="RefSeq" id="NP_078813.1">
    <property type="nucleotide sequence ID" value="NM_024537.4"/>
</dbReference>
<dbReference type="SMR" id="Q9HA77"/>
<dbReference type="BioGRID" id="122730">
    <property type="interactions" value="111"/>
</dbReference>
<dbReference type="FunCoup" id="Q9HA77">
    <property type="interactions" value="569"/>
</dbReference>
<dbReference type="IntAct" id="Q9HA77">
    <property type="interactions" value="23"/>
</dbReference>
<dbReference type="MINT" id="Q9HA77"/>
<dbReference type="STRING" id="9606.ENSP00000257347"/>
<dbReference type="DrugBank" id="DB00151">
    <property type="generic name" value="Cysteine"/>
</dbReference>
<dbReference type="GlyGen" id="Q9HA77">
    <property type="glycosylation" value="1 site, 1 O-linked glycan (1 site)"/>
</dbReference>
<dbReference type="iPTMnet" id="Q9HA77"/>
<dbReference type="PhosphoSitePlus" id="Q9HA77"/>
<dbReference type="SwissPalm" id="Q9HA77"/>
<dbReference type="BioMuta" id="CARS2"/>
<dbReference type="DMDM" id="74761587"/>
<dbReference type="jPOST" id="Q9HA77"/>
<dbReference type="MassIVE" id="Q9HA77"/>
<dbReference type="PaxDb" id="9606-ENSP00000257347"/>
<dbReference type="PeptideAtlas" id="Q9HA77"/>
<dbReference type="ProteomicsDB" id="81383"/>
<dbReference type="Pumba" id="Q9HA77"/>
<dbReference type="Antibodypedia" id="42558">
    <property type="antibodies" value="34 antibodies from 17 providers"/>
</dbReference>
<dbReference type="DNASU" id="79587"/>
<dbReference type="Ensembl" id="ENST00000257347.9">
    <property type="protein sequence ID" value="ENSP00000257347.4"/>
    <property type="gene ID" value="ENSG00000134905.17"/>
</dbReference>
<dbReference type="GeneID" id="79587"/>
<dbReference type="KEGG" id="hsa:79587"/>
<dbReference type="MANE-Select" id="ENST00000257347.9">
    <property type="protein sequence ID" value="ENSP00000257347.4"/>
    <property type="RefSeq nucleotide sequence ID" value="NM_024537.4"/>
    <property type="RefSeq protein sequence ID" value="NP_078813.1"/>
</dbReference>
<dbReference type="UCSC" id="uc001vrd.3">
    <property type="organism name" value="human"/>
</dbReference>
<dbReference type="AGR" id="HGNC:25695"/>
<dbReference type="CTD" id="79587"/>
<dbReference type="DisGeNET" id="79587"/>
<dbReference type="GeneCards" id="CARS2"/>
<dbReference type="HGNC" id="HGNC:25695">
    <property type="gene designation" value="CARS2"/>
</dbReference>
<dbReference type="HPA" id="ENSG00000134905">
    <property type="expression patterns" value="Low tissue specificity"/>
</dbReference>
<dbReference type="MalaCards" id="CARS2"/>
<dbReference type="MIM" id="612800">
    <property type="type" value="gene"/>
</dbReference>
<dbReference type="MIM" id="616672">
    <property type="type" value="phenotype"/>
</dbReference>
<dbReference type="neXtProt" id="NX_Q9HA77"/>
<dbReference type="OpenTargets" id="ENSG00000134905"/>
<dbReference type="Orphanet" id="477774">
    <property type="disease" value="Combined oxidative phosphorylation defect type 27"/>
</dbReference>
<dbReference type="PharmGKB" id="PA162381083"/>
<dbReference type="VEuPathDB" id="HostDB:ENSG00000134905"/>
<dbReference type="eggNOG" id="KOG2007">
    <property type="taxonomic scope" value="Eukaryota"/>
</dbReference>
<dbReference type="GeneTree" id="ENSGT00390000006347"/>
<dbReference type="HOGENOM" id="CLU_013528_0_3_1"/>
<dbReference type="InParanoid" id="Q9HA77"/>
<dbReference type="OMA" id="HAWPASE"/>
<dbReference type="OrthoDB" id="438179at2759"/>
<dbReference type="PAN-GO" id="Q9HA77">
    <property type="GO annotations" value="4 GO annotations based on evolutionary models"/>
</dbReference>
<dbReference type="PhylomeDB" id="Q9HA77"/>
<dbReference type="TreeFam" id="TF300384"/>
<dbReference type="BRENDA" id="6.1.1.16">
    <property type="organism ID" value="2681"/>
</dbReference>
<dbReference type="PathwayCommons" id="Q9HA77"/>
<dbReference type="Reactome" id="R-HSA-379726">
    <property type="pathway name" value="Mitochondrial tRNA aminoacylation"/>
</dbReference>
<dbReference type="SignaLink" id="Q9HA77"/>
<dbReference type="SIGNOR" id="Q9HA77"/>
<dbReference type="BioGRID-ORCS" id="79587">
    <property type="hits" value="253 hits in 1087 CRISPR screens"/>
</dbReference>
<dbReference type="ChiTaRS" id="CARS2">
    <property type="organism name" value="human"/>
</dbReference>
<dbReference type="GenomeRNAi" id="79587"/>
<dbReference type="Pharos" id="Q9HA77">
    <property type="development level" value="Tbio"/>
</dbReference>
<dbReference type="PRO" id="PR:Q9HA77"/>
<dbReference type="Proteomes" id="UP000005640">
    <property type="component" value="Chromosome 13"/>
</dbReference>
<dbReference type="RNAct" id="Q9HA77">
    <property type="molecule type" value="protein"/>
</dbReference>
<dbReference type="Bgee" id="ENSG00000134905">
    <property type="expression patterns" value="Expressed in monocyte and 186 other cell types or tissues"/>
</dbReference>
<dbReference type="ExpressionAtlas" id="Q9HA77">
    <property type="expression patterns" value="baseline and differential"/>
</dbReference>
<dbReference type="GO" id="GO:0005737">
    <property type="term" value="C:cytoplasm"/>
    <property type="evidence" value="ECO:0000318"/>
    <property type="project" value="GO_Central"/>
</dbReference>
<dbReference type="GO" id="GO:0005739">
    <property type="term" value="C:mitochondrion"/>
    <property type="evidence" value="ECO:0000314"/>
    <property type="project" value="UniProtKB"/>
</dbReference>
<dbReference type="GO" id="GO:0005524">
    <property type="term" value="F:ATP binding"/>
    <property type="evidence" value="ECO:0000318"/>
    <property type="project" value="GO_Central"/>
</dbReference>
<dbReference type="GO" id="GO:0004817">
    <property type="term" value="F:cysteine-tRNA ligase activity"/>
    <property type="evidence" value="ECO:0000315"/>
    <property type="project" value="UniProtKB"/>
</dbReference>
<dbReference type="GO" id="GO:0046872">
    <property type="term" value="F:metal ion binding"/>
    <property type="evidence" value="ECO:0007669"/>
    <property type="project" value="UniProtKB-KW"/>
</dbReference>
<dbReference type="GO" id="GO:0006423">
    <property type="term" value="P:cysteinyl-tRNA aminoacylation"/>
    <property type="evidence" value="ECO:0000315"/>
    <property type="project" value="UniProtKB"/>
</dbReference>
<dbReference type="CDD" id="cd00672">
    <property type="entry name" value="CysRS_core"/>
    <property type="match status" value="1"/>
</dbReference>
<dbReference type="FunFam" id="3.40.50.620:FF:000027">
    <property type="entry name" value="Cysteine--tRNA ligase, cytoplasmic"/>
    <property type="match status" value="1"/>
</dbReference>
<dbReference type="FunFam" id="1.20.120.1910:FF:000004">
    <property type="entry name" value="Cysteinyl-tRNA synthetase 2, mitochondrial"/>
    <property type="match status" value="1"/>
</dbReference>
<dbReference type="Gene3D" id="1.20.120.1910">
    <property type="entry name" value="Cysteine-tRNA ligase, C-terminal anti-codon recognition domain"/>
    <property type="match status" value="1"/>
</dbReference>
<dbReference type="Gene3D" id="3.40.50.620">
    <property type="entry name" value="HUPs"/>
    <property type="match status" value="1"/>
</dbReference>
<dbReference type="HAMAP" id="MF_00041">
    <property type="entry name" value="Cys_tRNA_synth"/>
    <property type="match status" value="1"/>
</dbReference>
<dbReference type="InterPro" id="IPR015803">
    <property type="entry name" value="Cys-tRNA-ligase"/>
</dbReference>
<dbReference type="InterPro" id="IPR024909">
    <property type="entry name" value="Cys-tRNA/MSH_ligase"/>
</dbReference>
<dbReference type="InterPro" id="IPR014729">
    <property type="entry name" value="Rossmann-like_a/b/a_fold"/>
</dbReference>
<dbReference type="InterPro" id="IPR032678">
    <property type="entry name" value="tRNA-synt_1_cat_dom"/>
</dbReference>
<dbReference type="InterPro" id="IPR009080">
    <property type="entry name" value="tRNAsynth_Ia_anticodon-bd"/>
</dbReference>
<dbReference type="NCBIfam" id="TIGR00435">
    <property type="entry name" value="cysS"/>
    <property type="match status" value="1"/>
</dbReference>
<dbReference type="PANTHER" id="PTHR10890:SF27">
    <property type="entry name" value="CYSTEINE--TRNA LIGASE, MITOCHONDRIAL-RELATED"/>
    <property type="match status" value="1"/>
</dbReference>
<dbReference type="PANTHER" id="PTHR10890">
    <property type="entry name" value="CYSTEINYL-TRNA SYNTHETASE"/>
    <property type="match status" value="1"/>
</dbReference>
<dbReference type="Pfam" id="PF01406">
    <property type="entry name" value="tRNA-synt_1e"/>
    <property type="match status" value="1"/>
</dbReference>
<dbReference type="PRINTS" id="PR00983">
    <property type="entry name" value="TRNASYNTHCYS"/>
</dbReference>
<dbReference type="SUPFAM" id="SSF47323">
    <property type="entry name" value="Anticodon-binding domain of a subclass of class I aminoacyl-tRNA synthetases"/>
    <property type="match status" value="1"/>
</dbReference>
<dbReference type="SUPFAM" id="SSF52374">
    <property type="entry name" value="Nucleotidylyl transferase"/>
    <property type="match status" value="1"/>
</dbReference>
<comment type="function">
    <text evidence="7">Mitochondrial cysteine-specific aminoacyl-tRNA synthetase that catalyzes the ATP-dependent ligation of cysteine to tRNA(Cys).</text>
</comment>
<comment type="function">
    <text evidence="7">In addition to its role as an aminoacyl-tRNA synthetase, has also cysteine persulfide synthase activity. Produces reactive persulfide species such as cysteine persulfide (CysSSH) from substrate cysteine and mediate direct incorporation of CysSSH into proteins during translations, resulting in protein persulfides and polysulfides (PubMed:29079736). CysSSHs behave as potent antioxidants and cellular protectants (PubMed:29079736).</text>
</comment>
<comment type="catalytic activity">
    <reaction evidence="9">
        <text>tRNA(Cys) + L-cysteine + ATP = L-cysteinyl-tRNA(Cys) + AMP + diphosphate</text>
        <dbReference type="Rhea" id="RHEA:17773"/>
        <dbReference type="Rhea" id="RHEA-COMP:9661"/>
        <dbReference type="Rhea" id="RHEA-COMP:9679"/>
        <dbReference type="ChEBI" id="CHEBI:30616"/>
        <dbReference type="ChEBI" id="CHEBI:33019"/>
        <dbReference type="ChEBI" id="CHEBI:35235"/>
        <dbReference type="ChEBI" id="CHEBI:78442"/>
        <dbReference type="ChEBI" id="CHEBI:78517"/>
        <dbReference type="ChEBI" id="CHEBI:456215"/>
        <dbReference type="EC" id="6.1.1.16"/>
    </reaction>
    <physiologicalReaction direction="right-to-left" evidence="9">
        <dbReference type="Rhea" id="RHEA:17775"/>
    </physiologicalReaction>
</comment>
<comment type="catalytic activity">
    <reaction evidence="7">
        <text>2 L-cysteine = S-sulfanyl-L-cysteine + L-alanine</text>
        <dbReference type="Rhea" id="RHEA:78543"/>
        <dbReference type="ChEBI" id="CHEBI:35235"/>
        <dbReference type="ChEBI" id="CHEBI:57972"/>
        <dbReference type="ChEBI" id="CHEBI:58591"/>
    </reaction>
    <physiologicalReaction direction="left-to-right" evidence="9">
        <dbReference type="Rhea" id="RHEA:78544"/>
    </physiologicalReaction>
</comment>
<comment type="catalytic activity">
    <reaction evidence="7">
        <text>S-sulfanyl-L-cysteine + L-cysteine = S-disulfanyl-L-cysteine + L-alanine</text>
        <dbReference type="Rhea" id="RHEA:78627"/>
        <dbReference type="ChEBI" id="CHEBI:35235"/>
        <dbReference type="ChEBI" id="CHEBI:57972"/>
        <dbReference type="ChEBI" id="CHEBI:58591"/>
        <dbReference type="ChEBI" id="CHEBI:229465"/>
    </reaction>
    <physiologicalReaction direction="left-to-right" evidence="9">
        <dbReference type="Rhea" id="RHEA:78628"/>
    </physiologicalReaction>
</comment>
<comment type="catalytic activity">
    <reaction evidence="7">
        <text>S-sulfanyl-L-cysteine + tRNA(Cys) + ATP = (S)-sulfanyl-L-cysteinyl-tRNA(Cys) + AMP + diphosphate</text>
        <dbReference type="Rhea" id="RHEA:78647"/>
        <dbReference type="Rhea" id="RHEA-COMP:9661"/>
        <dbReference type="Rhea" id="RHEA-COMP:19119"/>
        <dbReference type="ChEBI" id="CHEBI:30616"/>
        <dbReference type="ChEBI" id="CHEBI:33019"/>
        <dbReference type="ChEBI" id="CHEBI:58591"/>
        <dbReference type="ChEBI" id="CHEBI:78442"/>
        <dbReference type="ChEBI" id="CHEBI:229520"/>
        <dbReference type="ChEBI" id="CHEBI:456215"/>
    </reaction>
    <physiologicalReaction direction="left-to-right" evidence="9">
        <dbReference type="Rhea" id="RHEA:78648"/>
    </physiologicalReaction>
</comment>
<comment type="catalytic activity">
    <reaction evidence="7">
        <text>S-disulfanyl-L-cysteine + tRNA(Cys) + ATP = (S)-disulfanyl-L-cysteinyl-tRNA(Cys) + AMP + diphosphate</text>
        <dbReference type="Rhea" id="RHEA:78651"/>
        <dbReference type="Rhea" id="RHEA-COMP:9661"/>
        <dbReference type="Rhea" id="RHEA-COMP:19120"/>
        <dbReference type="ChEBI" id="CHEBI:30616"/>
        <dbReference type="ChEBI" id="CHEBI:33019"/>
        <dbReference type="ChEBI" id="CHEBI:78442"/>
        <dbReference type="ChEBI" id="CHEBI:229465"/>
        <dbReference type="ChEBI" id="CHEBI:229521"/>
        <dbReference type="ChEBI" id="CHEBI:456215"/>
    </reaction>
    <physiologicalReaction direction="left-to-right" evidence="9">
        <dbReference type="Rhea" id="RHEA:78652"/>
    </physiologicalReaction>
</comment>
<comment type="cofactor">
    <cofactor evidence="2">
        <name>Zn(2+)</name>
        <dbReference type="ChEBI" id="CHEBI:29105"/>
    </cofactor>
    <text evidence="2">Binds 1 zinc ion per subunit.</text>
</comment>
<comment type="subcellular location">
    <subcellularLocation>
        <location evidence="9">Mitochondrion</location>
    </subcellularLocation>
</comment>
<comment type="domain">
    <text evidence="7">'KIIK' region and 'KMSKS' region are required for cysteine persulfide synthase activity.</text>
</comment>
<comment type="disease" evidence="5 6">
    <disease id="DI-04592">
        <name>Combined oxidative phosphorylation deficiency 27</name>
        <acronym>COXPD27</acronym>
        <description>An autosomal recessive mitochondrial disorder characterized by multiple mitochondrial respiratory-chain-complex deficiencies causing neurological regression, progressive cognitive decline, complex movement disorder, epileptic encephalopathy, progressive spastic tetraparesis, and progressive impairment of vision and hearing.</description>
        <dbReference type="MIM" id="616672"/>
    </disease>
    <text>The disease is caused by variants affecting the gene represented in this entry.</text>
</comment>
<comment type="similarity">
    <text evidence="8">Belongs to the class-I aminoacyl-tRNA synthetase family.</text>
</comment>
<comment type="sequence caution" evidence="8">
    <conflict type="erroneous initiation">
        <sequence resource="EMBL-CDS" id="BAB93499"/>
    </conflict>
    <text>Truncated N-terminus.</text>
</comment>